<gene>
    <name evidence="1" type="primary">tsaD</name>
    <name type="synonym">gcp</name>
    <name type="ordered locus">Fnod_0840</name>
</gene>
<protein>
    <recommendedName>
        <fullName evidence="1">tRNA N6-adenosine threonylcarbamoyltransferase</fullName>
        <ecNumber evidence="1">2.3.1.234</ecNumber>
    </recommendedName>
    <alternativeName>
        <fullName evidence="1">N6-L-threonylcarbamoyladenine synthase</fullName>
        <shortName evidence="1">t(6)A synthase</shortName>
    </alternativeName>
    <alternativeName>
        <fullName evidence="1">t(6)A37 threonylcarbamoyladenosine biosynthesis protein TsaD</fullName>
    </alternativeName>
    <alternativeName>
        <fullName evidence="1">tRNA threonylcarbamoyladenosine biosynthesis protein TsaD</fullName>
    </alternativeName>
</protein>
<proteinExistence type="inferred from homology"/>
<feature type="chain" id="PRO_1000073523" description="tRNA N6-adenosine threonylcarbamoyltransferase">
    <location>
        <begin position="1"/>
        <end position="337"/>
    </location>
</feature>
<feature type="binding site" evidence="1">
    <location>
        <position position="110"/>
    </location>
    <ligand>
        <name>Fe cation</name>
        <dbReference type="ChEBI" id="CHEBI:24875"/>
    </ligand>
</feature>
<feature type="binding site" evidence="1">
    <location>
        <position position="114"/>
    </location>
    <ligand>
        <name>Fe cation</name>
        <dbReference type="ChEBI" id="CHEBI:24875"/>
    </ligand>
</feature>
<feature type="binding site" evidence="1">
    <location>
        <begin position="133"/>
        <end position="137"/>
    </location>
    <ligand>
        <name>substrate</name>
    </ligand>
</feature>
<feature type="binding site" evidence="1">
    <location>
        <position position="166"/>
    </location>
    <ligand>
        <name>substrate</name>
    </ligand>
</feature>
<feature type="binding site" evidence="1">
    <location>
        <position position="179"/>
    </location>
    <ligand>
        <name>substrate</name>
    </ligand>
</feature>
<feature type="binding site" evidence="1">
    <location>
        <position position="183"/>
    </location>
    <ligand>
        <name>substrate</name>
    </ligand>
</feature>
<feature type="binding site" evidence="1">
    <location>
        <position position="276"/>
    </location>
    <ligand>
        <name>substrate</name>
    </ligand>
</feature>
<feature type="binding site" evidence="1">
    <location>
        <position position="302"/>
    </location>
    <ligand>
        <name>Fe cation</name>
        <dbReference type="ChEBI" id="CHEBI:24875"/>
    </ligand>
</feature>
<evidence type="ECO:0000255" key="1">
    <source>
        <dbReference type="HAMAP-Rule" id="MF_01445"/>
    </source>
</evidence>
<organism>
    <name type="scientific">Fervidobacterium nodosum (strain ATCC 35602 / DSM 5306 / Rt17-B1)</name>
    <dbReference type="NCBI Taxonomy" id="381764"/>
    <lineage>
        <taxon>Bacteria</taxon>
        <taxon>Thermotogati</taxon>
        <taxon>Thermotogota</taxon>
        <taxon>Thermotogae</taxon>
        <taxon>Thermotogales</taxon>
        <taxon>Fervidobacteriaceae</taxon>
        <taxon>Fervidobacterium</taxon>
    </lineage>
</organism>
<sequence>MIVLGIETSCDETSVALVEDNTVIANLVYSQIQIHKKFGGVVPEIAAREHLKRLPILFSELISQTNINIERIDGIAVTKGPGLIGALLVGVSFAKGLALRYKKPLVGINHIIGHVYSNYLAYPDLKPPYIVLMVSGGHTLILKVEENNNVTILGRSVDDAVGEAFDKIARLLGLGYPGGPEIDKISKNGNPNAFNFPKPKMYDPDYNFSFSGLKTAVLYEIKRLTKSGYSENNLPIPDLAASAQEVMIDVLLHKVTKAARDNNLKNIVLAGGVAANSRLREKIRALSEEFNFYIPPLEYCSDNAAMIARAGLERIKSGENDGLNFEPVPNFFEMMST</sequence>
<name>TSAD_FERNB</name>
<keyword id="KW-0012">Acyltransferase</keyword>
<keyword id="KW-0963">Cytoplasm</keyword>
<keyword id="KW-0408">Iron</keyword>
<keyword id="KW-0479">Metal-binding</keyword>
<keyword id="KW-1185">Reference proteome</keyword>
<keyword id="KW-0808">Transferase</keyword>
<keyword id="KW-0819">tRNA processing</keyword>
<comment type="function">
    <text evidence="1">Required for the formation of a threonylcarbamoyl group on adenosine at position 37 (t(6)A37) in tRNAs that read codons beginning with adenine. Is involved in the transfer of the threonylcarbamoyl moiety of threonylcarbamoyl-AMP (TC-AMP) to the N6 group of A37, together with TsaE and TsaB. TsaD likely plays a direct catalytic role in this reaction.</text>
</comment>
<comment type="catalytic activity">
    <reaction evidence="1">
        <text>L-threonylcarbamoyladenylate + adenosine(37) in tRNA = N(6)-L-threonylcarbamoyladenosine(37) in tRNA + AMP + H(+)</text>
        <dbReference type="Rhea" id="RHEA:37059"/>
        <dbReference type="Rhea" id="RHEA-COMP:10162"/>
        <dbReference type="Rhea" id="RHEA-COMP:10163"/>
        <dbReference type="ChEBI" id="CHEBI:15378"/>
        <dbReference type="ChEBI" id="CHEBI:73682"/>
        <dbReference type="ChEBI" id="CHEBI:74411"/>
        <dbReference type="ChEBI" id="CHEBI:74418"/>
        <dbReference type="ChEBI" id="CHEBI:456215"/>
        <dbReference type="EC" id="2.3.1.234"/>
    </reaction>
</comment>
<comment type="cofactor">
    <cofactor evidence="1">
        <name>Fe(2+)</name>
        <dbReference type="ChEBI" id="CHEBI:29033"/>
    </cofactor>
    <text evidence="1">Binds 1 Fe(2+) ion per subunit.</text>
</comment>
<comment type="subcellular location">
    <subcellularLocation>
        <location evidence="1">Cytoplasm</location>
    </subcellularLocation>
</comment>
<comment type="similarity">
    <text evidence="1">Belongs to the KAE1 / TsaD family.</text>
</comment>
<accession>A7HLB0</accession>
<dbReference type="EC" id="2.3.1.234" evidence="1"/>
<dbReference type="EMBL" id="CP000771">
    <property type="protein sequence ID" value="ABS60693.1"/>
    <property type="molecule type" value="Genomic_DNA"/>
</dbReference>
<dbReference type="RefSeq" id="WP_011994009.1">
    <property type="nucleotide sequence ID" value="NC_009718.1"/>
</dbReference>
<dbReference type="SMR" id="A7HLB0"/>
<dbReference type="STRING" id="381764.Fnod_0840"/>
<dbReference type="KEGG" id="fno:Fnod_0840"/>
<dbReference type="eggNOG" id="COG0533">
    <property type="taxonomic scope" value="Bacteria"/>
</dbReference>
<dbReference type="HOGENOM" id="CLU_023208_0_2_0"/>
<dbReference type="OrthoDB" id="9806197at2"/>
<dbReference type="Proteomes" id="UP000002415">
    <property type="component" value="Chromosome"/>
</dbReference>
<dbReference type="GO" id="GO:0005737">
    <property type="term" value="C:cytoplasm"/>
    <property type="evidence" value="ECO:0007669"/>
    <property type="project" value="UniProtKB-SubCell"/>
</dbReference>
<dbReference type="GO" id="GO:0005506">
    <property type="term" value="F:iron ion binding"/>
    <property type="evidence" value="ECO:0007669"/>
    <property type="project" value="UniProtKB-UniRule"/>
</dbReference>
<dbReference type="GO" id="GO:0061711">
    <property type="term" value="F:N(6)-L-threonylcarbamoyladenine synthase activity"/>
    <property type="evidence" value="ECO:0007669"/>
    <property type="project" value="UniProtKB-EC"/>
</dbReference>
<dbReference type="GO" id="GO:0002949">
    <property type="term" value="P:tRNA threonylcarbamoyladenosine modification"/>
    <property type="evidence" value="ECO:0007669"/>
    <property type="project" value="UniProtKB-UniRule"/>
</dbReference>
<dbReference type="CDD" id="cd24133">
    <property type="entry name" value="ASKHA_NBD_TsaD_bac"/>
    <property type="match status" value="1"/>
</dbReference>
<dbReference type="FunFam" id="3.30.420.40:FF:000012">
    <property type="entry name" value="tRNA N6-adenosine threonylcarbamoyltransferase"/>
    <property type="match status" value="1"/>
</dbReference>
<dbReference type="FunFam" id="3.30.420.40:FF:000040">
    <property type="entry name" value="tRNA N6-adenosine threonylcarbamoyltransferase"/>
    <property type="match status" value="1"/>
</dbReference>
<dbReference type="Gene3D" id="3.30.420.40">
    <property type="match status" value="2"/>
</dbReference>
<dbReference type="HAMAP" id="MF_01445">
    <property type="entry name" value="TsaD"/>
    <property type="match status" value="1"/>
</dbReference>
<dbReference type="InterPro" id="IPR043129">
    <property type="entry name" value="ATPase_NBD"/>
</dbReference>
<dbReference type="InterPro" id="IPR000905">
    <property type="entry name" value="Gcp-like_dom"/>
</dbReference>
<dbReference type="InterPro" id="IPR017861">
    <property type="entry name" value="KAE1/TsaD"/>
</dbReference>
<dbReference type="InterPro" id="IPR017860">
    <property type="entry name" value="Peptidase_M22_CS"/>
</dbReference>
<dbReference type="InterPro" id="IPR022450">
    <property type="entry name" value="TsaD"/>
</dbReference>
<dbReference type="NCBIfam" id="TIGR00329">
    <property type="entry name" value="gcp_kae1"/>
    <property type="match status" value="1"/>
</dbReference>
<dbReference type="NCBIfam" id="TIGR03723">
    <property type="entry name" value="T6A_TsaD_YgjD"/>
    <property type="match status" value="1"/>
</dbReference>
<dbReference type="PANTHER" id="PTHR11735">
    <property type="entry name" value="TRNA N6-ADENOSINE THREONYLCARBAMOYLTRANSFERASE"/>
    <property type="match status" value="1"/>
</dbReference>
<dbReference type="PANTHER" id="PTHR11735:SF6">
    <property type="entry name" value="TRNA N6-ADENOSINE THREONYLCARBAMOYLTRANSFERASE, MITOCHONDRIAL"/>
    <property type="match status" value="1"/>
</dbReference>
<dbReference type="Pfam" id="PF00814">
    <property type="entry name" value="TsaD"/>
    <property type="match status" value="1"/>
</dbReference>
<dbReference type="PRINTS" id="PR00789">
    <property type="entry name" value="OSIALOPTASE"/>
</dbReference>
<dbReference type="SUPFAM" id="SSF53067">
    <property type="entry name" value="Actin-like ATPase domain"/>
    <property type="match status" value="2"/>
</dbReference>
<dbReference type="PROSITE" id="PS01016">
    <property type="entry name" value="GLYCOPROTEASE"/>
    <property type="match status" value="1"/>
</dbReference>
<reference key="1">
    <citation type="submission" date="2007-07" db="EMBL/GenBank/DDBJ databases">
        <title>Complete sequence of Fervidobacterium nodosum Rt17-B1.</title>
        <authorList>
            <consortium name="US DOE Joint Genome Institute"/>
            <person name="Copeland A."/>
            <person name="Lucas S."/>
            <person name="Lapidus A."/>
            <person name="Barry K."/>
            <person name="Glavina del Rio T."/>
            <person name="Dalin E."/>
            <person name="Tice H."/>
            <person name="Pitluck S."/>
            <person name="Saunders E."/>
            <person name="Brettin T."/>
            <person name="Bruce D."/>
            <person name="Detter J.C."/>
            <person name="Han C."/>
            <person name="Schmutz J."/>
            <person name="Larimer F."/>
            <person name="Land M."/>
            <person name="Hauser L."/>
            <person name="Kyrpides N."/>
            <person name="Mikhailova N."/>
            <person name="Nelson K."/>
            <person name="Gogarten J.P."/>
            <person name="Noll K."/>
            <person name="Richardson P."/>
        </authorList>
    </citation>
    <scope>NUCLEOTIDE SEQUENCE [LARGE SCALE GENOMIC DNA]</scope>
    <source>
        <strain>ATCC 35602 / DSM 5306 / Rt17-B1</strain>
    </source>
</reference>